<accession>Q6P5E6</accession>
<accession>Q3U374</accession>
<accession>Q6PFX3</accession>
<accession>Q6ZPY8</accession>
<accession>Q8BM76</accession>
<accession>Q9DC15</accession>
<proteinExistence type="evidence at protein level"/>
<organism>
    <name type="scientific">Mus musculus</name>
    <name type="common">Mouse</name>
    <dbReference type="NCBI Taxonomy" id="10090"/>
    <lineage>
        <taxon>Eukaryota</taxon>
        <taxon>Metazoa</taxon>
        <taxon>Chordata</taxon>
        <taxon>Craniata</taxon>
        <taxon>Vertebrata</taxon>
        <taxon>Euteleostomi</taxon>
        <taxon>Mammalia</taxon>
        <taxon>Eutheria</taxon>
        <taxon>Euarchontoglires</taxon>
        <taxon>Glires</taxon>
        <taxon>Rodentia</taxon>
        <taxon>Myomorpha</taxon>
        <taxon>Muroidea</taxon>
        <taxon>Muridae</taxon>
        <taxon>Murinae</taxon>
        <taxon>Mus</taxon>
        <taxon>Mus</taxon>
    </lineage>
</organism>
<keyword id="KW-0025">Alternative splicing</keyword>
<keyword id="KW-0967">Endosome</keyword>
<keyword id="KW-0333">Golgi apparatus</keyword>
<keyword id="KW-0472">Membrane</keyword>
<keyword id="KW-0653">Protein transport</keyword>
<keyword id="KW-1185">Reference proteome</keyword>
<keyword id="KW-0813">Transport</keyword>
<keyword id="KW-0832">Ubl conjugation</keyword>
<name>GGA2_MOUSE</name>
<sequence>MAATAVAAGTGSPAGTESAEGGPGAAAALELWLNKATDPSMAEQDWSAIQKFCEQVNTDPSGPTHAPWLLAHKIQSPQEKEALYALTVLEICMNHCGEKFHSEVAKFRFLNELIKVLSPKYLGAWATEKVKGRVIEILFSWTVWFPEDIKIRDAYQMLKKQGIIKQDPKLPMDKILPPPSPWPKSIFDADEEKSKLLTRLLKSNHPEDLQAANRLIKNLVKEEQEKSEKVSRRVSAVEEVRSHVRVLREMLSMYRRPGHALPDQQALQVVYERCEKLRPTLFRLASDTTDDDDALAEILQANDLLTQGVRLYKQVVEGRVSAGNAVPAAVGAIPAPRAFPNPEPCGLNCPLIDLETPSLLHQDLAALGINDVPTRNQVVIPSCCNDKKQPGAITLMGGGIQSLSADRNLLDLFSPQPSPGLNYVPQKSIPKEVPPGTKASPGWSWEAGPLASSTASQNTPLAHVFVPLESVKPSSLPPIVVYDRNGFRILLHFSQTGAPGHPDVKVLLLTMMSTATQPVWDVMFQVAVPKSMRVKLQPASSSKLPAFSPLMPPAVISQTLLLDNPHKEPIRLRYKLTFNQGGQPFSEVGEVKDFPDLAVLSTA</sequence>
<feature type="chain" id="PRO_0000212683" description="ADP-ribosylation factor-binding protein GGA2">
    <location>
        <begin position="1"/>
        <end position="603"/>
    </location>
</feature>
<feature type="domain" description="VHS" evidence="4">
    <location>
        <begin position="36"/>
        <end position="166"/>
    </location>
</feature>
<feature type="domain" description="GAT" evidence="5">
    <location>
        <begin position="190"/>
        <end position="317"/>
    </location>
</feature>
<feature type="domain" description="GAE" evidence="3">
    <location>
        <begin position="474"/>
        <end position="595"/>
    </location>
</feature>
<feature type="region of interest" description="Disordered" evidence="6">
    <location>
        <begin position="1"/>
        <end position="22"/>
    </location>
</feature>
<feature type="region of interest" description="Unstructured hinge">
    <location>
        <begin position="318"/>
        <end position="473"/>
    </location>
</feature>
<feature type="compositionally biased region" description="Low complexity" evidence="6">
    <location>
        <begin position="13"/>
        <end position="22"/>
    </location>
</feature>
<feature type="splice variant" id="VSP_013255" description="In isoform 2." evidence="9">
    <location>
        <begin position="1"/>
        <end position="249"/>
    </location>
</feature>
<feature type="sequence conflict" description="In Ref. 2; BAB23426." evidence="10" ref="2">
    <original>E</original>
    <variation>G</variation>
    <location>
        <position position="228"/>
    </location>
</feature>
<feature type="sequence conflict" description="In Ref. 2; BAB23426." evidence="10" ref="2">
    <original>P</original>
    <variation>A</variation>
    <location>
        <position position="499"/>
    </location>
</feature>
<comment type="function">
    <text evidence="2">Plays a role in protein sorting and trafficking between the trans-Golgi network (TGN) and endosomes. Mediates the ARF-dependent recruitment of clathrin to the TGN and binds ubiquitinated proteins and membrane cargo molecules with a cytosolic acidic cluster-dileucine (DXXLL) motif. Mediates export of the GPCR receptor ADRA2B to the cell surface. Regulates retrograde transport of phosphorylated form of BACE1 from endosomes to the trans-Golgi network.</text>
</comment>
<comment type="subunit">
    <text evidence="1 2 7 8">Monomer (By similarity). Interacts with NECAP1, TSG101, UBC and AFTPH/aftiphilin. Interacts with CNST (PubMed:19864490). Interacts with GGA1 and GGA3 (By similarity). Binds to clathrin and activated ARFs, such as ARF1, ARF5 and ARF6 (PubMed:11950392). Binds RABEP1 and RABGEF1. Interacts with the type-I membrane proteins LRP3, M6PR/CD-MPR, IGF2R/CI-MPR and BACE1. Interacts (via N-terminal VHS domain) with SORL1/sorLA and SORT1 (via C-terminal cytosolic domain) (By similarity). Binds the accessory proteins CCDC91, P200, SYNRG, EPN4 and NECAP2. Interacts with ADRA2B. Interacts (via VHS domain) with PIK4B; the interaction is important for PIK4B location at the Golgi apparatus membrane (By similarity).</text>
</comment>
<comment type="interaction">
    <interactant intactId="EBI-2616239">
        <id>Q6P5E6</id>
    </interactant>
    <interactant intactId="EBI-2615407">
        <id>Q8CBC4-3</id>
        <label>Cnst</label>
    </interactant>
    <organismsDiffer>false</organismsDiffer>
    <experiments>2</experiments>
</comment>
<comment type="subcellular location">
    <subcellularLocation>
        <location evidence="2">Golgi apparatus</location>
        <location evidence="2">trans-Golgi network membrane</location>
        <topology evidence="2">Peripheral membrane protein</topology>
    </subcellularLocation>
    <subcellularLocation>
        <location evidence="2">Endosome membrane</location>
        <topology evidence="2">Peripheral membrane protein</topology>
    </subcellularLocation>
    <subcellularLocation>
        <location evidence="2">Early endosome membrane</location>
        <topology evidence="2">Peripheral membrane protein</topology>
    </subcellularLocation>
</comment>
<comment type="alternative products">
    <event type="alternative splicing"/>
    <isoform>
        <id>Q6P5E6-1</id>
        <name>1</name>
        <sequence type="displayed"/>
    </isoform>
    <isoform>
        <id>Q6P5E6-2</id>
        <name>2</name>
        <sequence type="described" ref="VSP_013255"/>
    </isoform>
</comment>
<comment type="domain">
    <text evidence="2">The VHS domain functions as a recognition module for sorting signals composed of an acidic cluster followed by two leucines (DXXLL motif).</text>
</comment>
<comment type="domain">
    <text evidence="2">The GAT domain is responsible for interaction with ARF-GTP, UBC and RABEP1. Required for recruitment to the TGN it prevents ARF-GTP hydrolysis.</text>
</comment>
<comment type="domain">
    <text evidence="2">The unstructured hinge region contains clathrin-binding but no autoinhibitory (DXXLL) motifs.</text>
</comment>
<comment type="domain">
    <text evidence="2">The GAE domain binds accessory proteins regulating GGAs function.</text>
</comment>
<comment type="PTM">
    <text evidence="1">Ubiquitinated.</text>
</comment>
<comment type="similarity">
    <text evidence="10">Belongs to the GGA protein family.</text>
</comment>
<comment type="sequence caution" evidence="10">
    <conflict type="erroneous initiation">
        <sequence resource="EMBL-CDS" id="BAC28769"/>
    </conflict>
    <text>Truncated N-terminus.</text>
</comment>
<comment type="sequence caution" evidence="10">
    <conflict type="erroneous initiation">
        <sequence resource="EMBL-CDS" id="BAC98090"/>
    </conflict>
    <text>Extended N-terminus.</text>
</comment>
<evidence type="ECO:0000250" key="1"/>
<evidence type="ECO:0000250" key="2">
    <source>
        <dbReference type="UniProtKB" id="Q9UJY4"/>
    </source>
</evidence>
<evidence type="ECO:0000255" key="3">
    <source>
        <dbReference type="PROSITE-ProRule" id="PRU00093"/>
    </source>
</evidence>
<evidence type="ECO:0000255" key="4">
    <source>
        <dbReference type="PROSITE-ProRule" id="PRU00218"/>
    </source>
</evidence>
<evidence type="ECO:0000255" key="5">
    <source>
        <dbReference type="PROSITE-ProRule" id="PRU00373"/>
    </source>
</evidence>
<evidence type="ECO:0000256" key="6">
    <source>
        <dbReference type="SAM" id="MobiDB-lite"/>
    </source>
</evidence>
<evidence type="ECO:0000269" key="7">
    <source>
    </source>
</evidence>
<evidence type="ECO:0000269" key="8">
    <source>
    </source>
</evidence>
<evidence type="ECO:0000303" key="9">
    <source>
    </source>
</evidence>
<evidence type="ECO:0000305" key="10"/>
<protein>
    <recommendedName>
        <fullName>ADP-ribosylation factor-binding protein GGA2</fullName>
    </recommendedName>
    <alternativeName>
        <fullName>Gamma-adaptin-related protein 2</fullName>
    </alternativeName>
    <alternativeName>
        <fullName>Golgi-localized, gamma ear-containing, ARF-binding protein 2</fullName>
    </alternativeName>
</protein>
<dbReference type="EMBL" id="AK004632">
    <property type="protein sequence ID" value="BAB23426.1"/>
    <property type="molecule type" value="mRNA"/>
</dbReference>
<dbReference type="EMBL" id="AK034612">
    <property type="protein sequence ID" value="BAC28769.1"/>
    <property type="status" value="ALT_INIT"/>
    <property type="molecule type" value="mRNA"/>
</dbReference>
<dbReference type="EMBL" id="AK129280">
    <property type="protein sequence ID" value="BAC98090.1"/>
    <property type="status" value="ALT_INIT"/>
    <property type="molecule type" value="mRNA"/>
</dbReference>
<dbReference type="EMBL" id="AK143691">
    <property type="protein sequence ID" value="BAE25501.1"/>
    <property type="molecule type" value="mRNA"/>
</dbReference>
<dbReference type="EMBL" id="AK154904">
    <property type="protein sequence ID" value="BAE32915.1"/>
    <property type="molecule type" value="mRNA"/>
</dbReference>
<dbReference type="EMBL" id="BC057377">
    <property type="protein sequence ID" value="AAH57377.1"/>
    <property type="molecule type" value="mRNA"/>
</dbReference>
<dbReference type="EMBL" id="BC062933">
    <property type="protein sequence ID" value="AAH62933.1"/>
    <property type="molecule type" value="mRNA"/>
</dbReference>
<dbReference type="CCDS" id="CCDS40116.1">
    <molecule id="Q6P5E6-1"/>
</dbReference>
<dbReference type="RefSeq" id="NP_083034.1">
    <molecule id="Q6P5E6-1"/>
    <property type="nucleotide sequence ID" value="NM_028758.2"/>
</dbReference>
<dbReference type="SMR" id="Q6P5E6"/>
<dbReference type="BioGRID" id="216496">
    <property type="interactions" value="2"/>
</dbReference>
<dbReference type="FunCoup" id="Q6P5E6">
    <property type="interactions" value="1893"/>
</dbReference>
<dbReference type="IntAct" id="Q6P5E6">
    <property type="interactions" value="2"/>
</dbReference>
<dbReference type="MINT" id="Q6P5E6"/>
<dbReference type="STRING" id="10090.ENSMUSP00000033160"/>
<dbReference type="GlyGen" id="Q6P5E6">
    <property type="glycosylation" value="1 site, 1 O-linked glycan (1 site)"/>
</dbReference>
<dbReference type="iPTMnet" id="Q6P5E6"/>
<dbReference type="PhosphoSitePlus" id="Q6P5E6"/>
<dbReference type="PaxDb" id="10090-ENSMUSP00000033160"/>
<dbReference type="PeptideAtlas" id="Q6P5E6"/>
<dbReference type="ProteomicsDB" id="267434">
    <molecule id="Q6P5E6-1"/>
</dbReference>
<dbReference type="ProteomicsDB" id="267435">
    <molecule id="Q6P5E6-2"/>
</dbReference>
<dbReference type="Pumba" id="Q6P5E6"/>
<dbReference type="Antibodypedia" id="12586">
    <property type="antibodies" value="214 antibodies from 31 providers"/>
</dbReference>
<dbReference type="DNASU" id="74105"/>
<dbReference type="Ensembl" id="ENSMUST00000033160.15">
    <molecule id="Q6P5E6-1"/>
    <property type="protein sequence ID" value="ENSMUSP00000033160.9"/>
    <property type="gene ID" value="ENSMUSG00000030872.15"/>
</dbReference>
<dbReference type="Ensembl" id="ENSMUST00000124566.2">
    <molecule id="Q6P5E6-1"/>
    <property type="protein sequence ID" value="ENSMUSP00000115581.2"/>
    <property type="gene ID" value="ENSMUSG00000030872.15"/>
</dbReference>
<dbReference type="GeneID" id="74105"/>
<dbReference type="KEGG" id="mmu:74105"/>
<dbReference type="UCSC" id="uc009joa.1">
    <molecule id="Q6P5E6-1"/>
    <property type="organism name" value="mouse"/>
</dbReference>
<dbReference type="AGR" id="MGI:1921355"/>
<dbReference type="CTD" id="23062"/>
<dbReference type="MGI" id="MGI:1921355">
    <property type="gene designation" value="Gga2"/>
</dbReference>
<dbReference type="VEuPathDB" id="HostDB:ENSMUSG00000030872"/>
<dbReference type="eggNOG" id="KOG1086">
    <property type="taxonomic scope" value="Eukaryota"/>
</dbReference>
<dbReference type="GeneTree" id="ENSGT00940000159613"/>
<dbReference type="HOGENOM" id="CLU_015010_0_0_1"/>
<dbReference type="InParanoid" id="Q6P5E6"/>
<dbReference type="OMA" id="NCCKEKK"/>
<dbReference type="OrthoDB" id="447025at2759"/>
<dbReference type="PhylomeDB" id="Q6P5E6"/>
<dbReference type="TreeFam" id="TF318574"/>
<dbReference type="BioGRID-ORCS" id="74105">
    <property type="hits" value="0 hits in 77 CRISPR screens"/>
</dbReference>
<dbReference type="ChiTaRS" id="Gga2">
    <property type="organism name" value="mouse"/>
</dbReference>
<dbReference type="PRO" id="PR:Q6P5E6"/>
<dbReference type="Proteomes" id="UP000000589">
    <property type="component" value="Chromosome 7"/>
</dbReference>
<dbReference type="RNAct" id="Q6P5E6">
    <property type="molecule type" value="protein"/>
</dbReference>
<dbReference type="Bgee" id="ENSMUSG00000030872">
    <property type="expression patterns" value="Expressed in otic placode and 263 other cell types or tissues"/>
</dbReference>
<dbReference type="GO" id="GO:0030136">
    <property type="term" value="C:clathrin-coated vesicle"/>
    <property type="evidence" value="ECO:0007669"/>
    <property type="project" value="Ensembl"/>
</dbReference>
<dbReference type="GO" id="GO:0031901">
    <property type="term" value="C:early endosome membrane"/>
    <property type="evidence" value="ECO:0007669"/>
    <property type="project" value="UniProtKB-SubCell"/>
</dbReference>
<dbReference type="GO" id="GO:0005802">
    <property type="term" value="C:trans-Golgi network"/>
    <property type="evidence" value="ECO:0000266"/>
    <property type="project" value="MGI"/>
</dbReference>
<dbReference type="GO" id="GO:0035091">
    <property type="term" value="F:phosphatidylinositol binding"/>
    <property type="evidence" value="ECO:0007669"/>
    <property type="project" value="InterPro"/>
</dbReference>
<dbReference type="GO" id="GO:0031267">
    <property type="term" value="F:small GTPase binding"/>
    <property type="evidence" value="ECO:0000266"/>
    <property type="project" value="MGI"/>
</dbReference>
<dbReference type="GO" id="GO:0043130">
    <property type="term" value="F:ubiquitin binding"/>
    <property type="evidence" value="ECO:0007669"/>
    <property type="project" value="InterPro"/>
</dbReference>
<dbReference type="GO" id="GO:0043001">
    <property type="term" value="P:Golgi to plasma membrane protein transport"/>
    <property type="evidence" value="ECO:0000250"/>
    <property type="project" value="UniProtKB"/>
</dbReference>
<dbReference type="GO" id="GO:0006886">
    <property type="term" value="P:intracellular protein transport"/>
    <property type="evidence" value="ECO:0007669"/>
    <property type="project" value="InterPro"/>
</dbReference>
<dbReference type="GO" id="GO:0034394">
    <property type="term" value="P:protein localization to cell surface"/>
    <property type="evidence" value="ECO:0000250"/>
    <property type="project" value="UniProtKB"/>
</dbReference>
<dbReference type="CDD" id="cd17010">
    <property type="entry name" value="VHS_GGA2"/>
    <property type="match status" value="1"/>
</dbReference>
<dbReference type="FunFam" id="2.60.40.1230:FF:000001">
    <property type="entry name" value="ADP-ribosylation factor-binding protein GGA1 isoform 1"/>
    <property type="match status" value="1"/>
</dbReference>
<dbReference type="FunFam" id="1.20.5.170:FF:000023">
    <property type="entry name" value="ADP-ribosylation factor-binding protein GGA3 isoform X1"/>
    <property type="match status" value="1"/>
</dbReference>
<dbReference type="FunFam" id="1.25.40.90:FF:000011">
    <property type="entry name" value="ADP-ribosylation factor-binding protein GGA3 isoform X1"/>
    <property type="match status" value="1"/>
</dbReference>
<dbReference type="Gene3D" id="1.20.5.170">
    <property type="match status" value="1"/>
</dbReference>
<dbReference type="Gene3D" id="1.20.58.160">
    <property type="match status" value="1"/>
</dbReference>
<dbReference type="Gene3D" id="1.25.40.90">
    <property type="match status" value="1"/>
</dbReference>
<dbReference type="Gene3D" id="2.60.40.1230">
    <property type="match status" value="1"/>
</dbReference>
<dbReference type="InterPro" id="IPR008152">
    <property type="entry name" value="Clathrin_a/b/g-adaptin_app_Ig"/>
</dbReference>
<dbReference type="InterPro" id="IPR013041">
    <property type="entry name" value="Clathrin_app_Ig-like_sf"/>
</dbReference>
<dbReference type="InterPro" id="IPR008942">
    <property type="entry name" value="ENTH_VHS"/>
</dbReference>
<dbReference type="InterPro" id="IPR008153">
    <property type="entry name" value="GAE_dom"/>
</dbReference>
<dbReference type="InterPro" id="IPR004152">
    <property type="entry name" value="GAT_dom"/>
</dbReference>
<dbReference type="InterPro" id="IPR038425">
    <property type="entry name" value="GAT_sf"/>
</dbReference>
<dbReference type="InterPro" id="IPR027422">
    <property type="entry name" value="GGA1-3"/>
</dbReference>
<dbReference type="InterPro" id="IPR041198">
    <property type="entry name" value="GGA_N-GAT"/>
</dbReference>
<dbReference type="InterPro" id="IPR002014">
    <property type="entry name" value="VHS_dom"/>
</dbReference>
<dbReference type="PANTHER" id="PTHR45905:SF2">
    <property type="entry name" value="ADP-RIBOSYLATION FACTOR-BINDING PROTEIN GGA2"/>
    <property type="match status" value="1"/>
</dbReference>
<dbReference type="PANTHER" id="PTHR45905">
    <property type="entry name" value="GOLGI-LOCALIZED, GAMMA-ADAPTIN EAR CONTAINING, ARF BINDING PROTEIN"/>
    <property type="match status" value="1"/>
</dbReference>
<dbReference type="Pfam" id="PF02883">
    <property type="entry name" value="Alpha_adaptinC2"/>
    <property type="match status" value="1"/>
</dbReference>
<dbReference type="Pfam" id="PF03127">
    <property type="entry name" value="GAT"/>
    <property type="match status" value="1"/>
</dbReference>
<dbReference type="Pfam" id="PF18308">
    <property type="entry name" value="GGA_N-GAT"/>
    <property type="match status" value="1"/>
</dbReference>
<dbReference type="Pfam" id="PF00790">
    <property type="entry name" value="VHS"/>
    <property type="match status" value="1"/>
</dbReference>
<dbReference type="SMART" id="SM00809">
    <property type="entry name" value="Alpha_adaptinC2"/>
    <property type="match status" value="1"/>
</dbReference>
<dbReference type="SMART" id="SM00288">
    <property type="entry name" value="VHS"/>
    <property type="match status" value="1"/>
</dbReference>
<dbReference type="SUPFAM" id="SSF49348">
    <property type="entry name" value="Clathrin adaptor appendage domain"/>
    <property type="match status" value="1"/>
</dbReference>
<dbReference type="SUPFAM" id="SSF48464">
    <property type="entry name" value="ENTH/VHS domain"/>
    <property type="match status" value="1"/>
</dbReference>
<dbReference type="SUPFAM" id="SSF89009">
    <property type="entry name" value="GAT-like domain"/>
    <property type="match status" value="1"/>
</dbReference>
<dbReference type="PROSITE" id="PS50180">
    <property type="entry name" value="GAE"/>
    <property type="match status" value="1"/>
</dbReference>
<dbReference type="PROSITE" id="PS50909">
    <property type="entry name" value="GAT"/>
    <property type="match status" value="1"/>
</dbReference>
<dbReference type="PROSITE" id="PS50179">
    <property type="entry name" value="VHS"/>
    <property type="match status" value="1"/>
</dbReference>
<gene>
    <name type="primary">Gga2</name>
    <name type="synonym">Kiaa1080</name>
</gene>
<reference key="1">
    <citation type="journal article" date="2003" name="DNA Res.">
        <title>Prediction of the coding sequences of mouse homologues of KIAA gene: III. The complete nucleotide sequences of 500 mouse KIAA-homologous cDNAs identified by screening of terminal sequences of cDNA clones randomly sampled from size-fractionated libraries.</title>
        <authorList>
            <person name="Okazaki N."/>
            <person name="Kikuno R."/>
            <person name="Ohara R."/>
            <person name="Inamoto S."/>
            <person name="Koseki H."/>
            <person name="Hiraoka S."/>
            <person name="Saga Y."/>
            <person name="Nagase T."/>
            <person name="Ohara O."/>
            <person name="Koga H."/>
        </authorList>
    </citation>
    <scope>NUCLEOTIDE SEQUENCE [LARGE SCALE MRNA] (ISOFORM 1)</scope>
    <source>
        <tissue>Embryonic tail</tissue>
    </source>
</reference>
<reference key="2">
    <citation type="journal article" date="2005" name="Science">
        <title>The transcriptional landscape of the mammalian genome.</title>
        <authorList>
            <person name="Carninci P."/>
            <person name="Kasukawa T."/>
            <person name="Katayama S."/>
            <person name="Gough J."/>
            <person name="Frith M.C."/>
            <person name="Maeda N."/>
            <person name="Oyama R."/>
            <person name="Ravasi T."/>
            <person name="Lenhard B."/>
            <person name="Wells C."/>
            <person name="Kodzius R."/>
            <person name="Shimokawa K."/>
            <person name="Bajic V.B."/>
            <person name="Brenner S.E."/>
            <person name="Batalov S."/>
            <person name="Forrest A.R."/>
            <person name="Zavolan M."/>
            <person name="Davis M.J."/>
            <person name="Wilming L.G."/>
            <person name="Aidinis V."/>
            <person name="Allen J.E."/>
            <person name="Ambesi-Impiombato A."/>
            <person name="Apweiler R."/>
            <person name="Aturaliya R.N."/>
            <person name="Bailey T.L."/>
            <person name="Bansal M."/>
            <person name="Baxter L."/>
            <person name="Beisel K.W."/>
            <person name="Bersano T."/>
            <person name="Bono H."/>
            <person name="Chalk A.M."/>
            <person name="Chiu K.P."/>
            <person name="Choudhary V."/>
            <person name="Christoffels A."/>
            <person name="Clutterbuck D.R."/>
            <person name="Crowe M.L."/>
            <person name="Dalla E."/>
            <person name="Dalrymple B.P."/>
            <person name="de Bono B."/>
            <person name="Della Gatta G."/>
            <person name="di Bernardo D."/>
            <person name="Down T."/>
            <person name="Engstrom P."/>
            <person name="Fagiolini M."/>
            <person name="Faulkner G."/>
            <person name="Fletcher C.F."/>
            <person name="Fukushima T."/>
            <person name="Furuno M."/>
            <person name="Futaki S."/>
            <person name="Gariboldi M."/>
            <person name="Georgii-Hemming P."/>
            <person name="Gingeras T.R."/>
            <person name="Gojobori T."/>
            <person name="Green R.E."/>
            <person name="Gustincich S."/>
            <person name="Harbers M."/>
            <person name="Hayashi Y."/>
            <person name="Hensch T.K."/>
            <person name="Hirokawa N."/>
            <person name="Hill D."/>
            <person name="Huminiecki L."/>
            <person name="Iacono M."/>
            <person name="Ikeo K."/>
            <person name="Iwama A."/>
            <person name="Ishikawa T."/>
            <person name="Jakt M."/>
            <person name="Kanapin A."/>
            <person name="Katoh M."/>
            <person name="Kawasawa Y."/>
            <person name="Kelso J."/>
            <person name="Kitamura H."/>
            <person name="Kitano H."/>
            <person name="Kollias G."/>
            <person name="Krishnan S.P."/>
            <person name="Kruger A."/>
            <person name="Kummerfeld S.K."/>
            <person name="Kurochkin I.V."/>
            <person name="Lareau L.F."/>
            <person name="Lazarevic D."/>
            <person name="Lipovich L."/>
            <person name="Liu J."/>
            <person name="Liuni S."/>
            <person name="McWilliam S."/>
            <person name="Madan Babu M."/>
            <person name="Madera M."/>
            <person name="Marchionni L."/>
            <person name="Matsuda H."/>
            <person name="Matsuzawa S."/>
            <person name="Miki H."/>
            <person name="Mignone F."/>
            <person name="Miyake S."/>
            <person name="Morris K."/>
            <person name="Mottagui-Tabar S."/>
            <person name="Mulder N."/>
            <person name="Nakano N."/>
            <person name="Nakauchi H."/>
            <person name="Ng P."/>
            <person name="Nilsson R."/>
            <person name="Nishiguchi S."/>
            <person name="Nishikawa S."/>
            <person name="Nori F."/>
            <person name="Ohara O."/>
            <person name="Okazaki Y."/>
            <person name="Orlando V."/>
            <person name="Pang K.C."/>
            <person name="Pavan W.J."/>
            <person name="Pavesi G."/>
            <person name="Pesole G."/>
            <person name="Petrovsky N."/>
            <person name="Piazza S."/>
            <person name="Reed J."/>
            <person name="Reid J.F."/>
            <person name="Ring B.Z."/>
            <person name="Ringwald M."/>
            <person name="Rost B."/>
            <person name="Ruan Y."/>
            <person name="Salzberg S.L."/>
            <person name="Sandelin A."/>
            <person name="Schneider C."/>
            <person name="Schoenbach C."/>
            <person name="Sekiguchi K."/>
            <person name="Semple C.A."/>
            <person name="Seno S."/>
            <person name="Sessa L."/>
            <person name="Sheng Y."/>
            <person name="Shibata Y."/>
            <person name="Shimada H."/>
            <person name="Shimada K."/>
            <person name="Silva D."/>
            <person name="Sinclair B."/>
            <person name="Sperling S."/>
            <person name="Stupka E."/>
            <person name="Sugiura K."/>
            <person name="Sultana R."/>
            <person name="Takenaka Y."/>
            <person name="Taki K."/>
            <person name="Tammoja K."/>
            <person name="Tan S.L."/>
            <person name="Tang S."/>
            <person name="Taylor M.S."/>
            <person name="Tegner J."/>
            <person name="Teichmann S.A."/>
            <person name="Ueda H.R."/>
            <person name="van Nimwegen E."/>
            <person name="Verardo R."/>
            <person name="Wei C.L."/>
            <person name="Yagi K."/>
            <person name="Yamanishi H."/>
            <person name="Zabarovsky E."/>
            <person name="Zhu S."/>
            <person name="Zimmer A."/>
            <person name="Hide W."/>
            <person name="Bult C."/>
            <person name="Grimmond S.M."/>
            <person name="Teasdale R.D."/>
            <person name="Liu E.T."/>
            <person name="Brusic V."/>
            <person name="Quackenbush J."/>
            <person name="Wahlestedt C."/>
            <person name="Mattick J.S."/>
            <person name="Hume D.A."/>
            <person name="Kai C."/>
            <person name="Sasaki D."/>
            <person name="Tomaru Y."/>
            <person name="Fukuda S."/>
            <person name="Kanamori-Katayama M."/>
            <person name="Suzuki M."/>
            <person name="Aoki J."/>
            <person name="Arakawa T."/>
            <person name="Iida J."/>
            <person name="Imamura K."/>
            <person name="Itoh M."/>
            <person name="Kato T."/>
            <person name="Kawaji H."/>
            <person name="Kawagashira N."/>
            <person name="Kawashima T."/>
            <person name="Kojima M."/>
            <person name="Kondo S."/>
            <person name="Konno H."/>
            <person name="Nakano K."/>
            <person name="Ninomiya N."/>
            <person name="Nishio T."/>
            <person name="Okada M."/>
            <person name="Plessy C."/>
            <person name="Shibata K."/>
            <person name="Shiraki T."/>
            <person name="Suzuki S."/>
            <person name="Tagami M."/>
            <person name="Waki K."/>
            <person name="Watahiki A."/>
            <person name="Okamura-Oho Y."/>
            <person name="Suzuki H."/>
            <person name="Kawai J."/>
            <person name="Hayashizaki Y."/>
        </authorList>
    </citation>
    <scope>NUCLEOTIDE SEQUENCE [LARGE SCALE MRNA] (ISOFORM 1)</scope>
    <source>
        <strain>C57BL/6J</strain>
        <strain>NOD</strain>
        <tissue>Embryo</tissue>
        <tissue>Spleen</tissue>
    </source>
</reference>
<reference key="3">
    <citation type="journal article" date="2004" name="Genome Res.">
        <title>The status, quality, and expansion of the NIH full-length cDNA project: the Mammalian Gene Collection (MGC).</title>
        <authorList>
            <consortium name="The MGC Project Team"/>
        </authorList>
    </citation>
    <scope>NUCLEOTIDE SEQUENCE [LARGE SCALE MRNA] (ISOFORMS 1 AND 2)</scope>
    <source>
        <strain>C57BL/6J</strain>
        <tissue>Brain</tissue>
    </source>
</reference>
<reference key="4">
    <citation type="journal article" date="2002" name="Biochem. J.">
        <title>GGA proteins associate with Golgi membranes through interaction between their GGAH domains and ADP-ribosylation factors.</title>
        <authorList>
            <person name="Takatsu H."/>
            <person name="Yoshino K."/>
            <person name="Toda K."/>
            <person name="Nakayama K."/>
        </authorList>
    </citation>
    <scope>INTERACTION WITH ARF1; ARF5 AND ARF6</scope>
</reference>
<reference key="5">
    <citation type="journal article" date="2010" name="Cell">
        <title>A tissue-specific atlas of mouse protein phosphorylation and expression.</title>
        <authorList>
            <person name="Huttlin E.L."/>
            <person name="Jedrychowski M.P."/>
            <person name="Elias J.E."/>
            <person name="Goswami T."/>
            <person name="Rad R."/>
            <person name="Beausoleil S.A."/>
            <person name="Villen J."/>
            <person name="Haas W."/>
            <person name="Sowa M.E."/>
            <person name="Gygi S.P."/>
        </authorList>
    </citation>
    <scope>IDENTIFICATION BY MASS SPECTROMETRY [LARGE SCALE ANALYSIS]</scope>
    <source>
        <tissue>Kidney</tissue>
        <tissue>Lung</tissue>
        <tissue>Pancreas</tissue>
        <tissue>Spleen</tissue>
    </source>
</reference>
<reference key="6">
    <citation type="journal article" date="2010" name="Hum. Mol. Genet.">
        <title>Consortin, a trans-Golgi network cargo receptor for the plasma membrane targeting and recycling of connexins.</title>
        <authorList>
            <person name="del Castillo F.J."/>
            <person name="Cohen-Salmon M."/>
            <person name="Charollais A."/>
            <person name="Caille D."/>
            <person name="Lampe P.D."/>
            <person name="Chavrier P."/>
            <person name="Meda P."/>
            <person name="Petit C."/>
        </authorList>
    </citation>
    <scope>INTERACTION WITH CNST</scope>
</reference>